<protein>
    <recommendedName>
        <fullName>Mediator of RNA polymerase II transcription subunit 17</fullName>
    </recommendedName>
    <alternativeName>
        <fullName>Mediator complex subunit 17</fullName>
    </alternativeName>
</protein>
<accession>Q7PVZ2</accession>
<reference key="1">
    <citation type="journal article" date="2002" name="Science">
        <title>The genome sequence of the malaria mosquito Anopheles gambiae.</title>
        <authorList>
            <person name="Holt R.A."/>
            <person name="Subramanian G.M."/>
            <person name="Halpern A."/>
            <person name="Sutton G.G."/>
            <person name="Charlab R."/>
            <person name="Nusskern D.R."/>
            <person name="Wincker P."/>
            <person name="Clark A.G."/>
            <person name="Ribeiro J.M.C."/>
            <person name="Wides R."/>
            <person name="Salzberg S.L."/>
            <person name="Loftus B.J."/>
            <person name="Yandell M.D."/>
            <person name="Majoros W.H."/>
            <person name="Rusch D.B."/>
            <person name="Lai Z."/>
            <person name="Kraft C.L."/>
            <person name="Abril J.F."/>
            <person name="Anthouard V."/>
            <person name="Arensburger P."/>
            <person name="Atkinson P.W."/>
            <person name="Baden H."/>
            <person name="de Berardinis V."/>
            <person name="Baldwin D."/>
            <person name="Benes V."/>
            <person name="Biedler J."/>
            <person name="Blass C."/>
            <person name="Bolanos R."/>
            <person name="Boscus D."/>
            <person name="Barnstead M."/>
            <person name="Cai S."/>
            <person name="Center A."/>
            <person name="Chaturverdi K."/>
            <person name="Christophides G.K."/>
            <person name="Chrystal M.A.M."/>
            <person name="Clamp M."/>
            <person name="Cravchik A."/>
            <person name="Curwen V."/>
            <person name="Dana A."/>
            <person name="Delcher A."/>
            <person name="Dew I."/>
            <person name="Evans C.A."/>
            <person name="Flanigan M."/>
            <person name="Grundschober-Freimoser A."/>
            <person name="Friedli L."/>
            <person name="Gu Z."/>
            <person name="Guan P."/>
            <person name="Guigo R."/>
            <person name="Hillenmeyer M.E."/>
            <person name="Hladun S.L."/>
            <person name="Hogan J.R."/>
            <person name="Hong Y.S."/>
            <person name="Hoover J."/>
            <person name="Jaillon O."/>
            <person name="Ke Z."/>
            <person name="Kodira C.D."/>
            <person name="Kokoza E."/>
            <person name="Koutsos A."/>
            <person name="Letunic I."/>
            <person name="Levitsky A.A."/>
            <person name="Liang Y."/>
            <person name="Lin J.-J."/>
            <person name="Lobo N.F."/>
            <person name="Lopez J.R."/>
            <person name="Malek J.A."/>
            <person name="McIntosh T.C."/>
            <person name="Meister S."/>
            <person name="Miller J.R."/>
            <person name="Mobarry C."/>
            <person name="Mongin E."/>
            <person name="Murphy S.D."/>
            <person name="O'Brochta D.A."/>
            <person name="Pfannkoch C."/>
            <person name="Qi R."/>
            <person name="Regier M.A."/>
            <person name="Remington K."/>
            <person name="Shao H."/>
            <person name="Sharakhova M.V."/>
            <person name="Sitter C.D."/>
            <person name="Shetty J."/>
            <person name="Smith T.J."/>
            <person name="Strong R."/>
            <person name="Sun J."/>
            <person name="Thomasova D."/>
            <person name="Ton L.Q."/>
            <person name="Topalis P."/>
            <person name="Tu Z.J."/>
            <person name="Unger M.F."/>
            <person name="Walenz B."/>
            <person name="Wang A.H."/>
            <person name="Wang J."/>
            <person name="Wang M."/>
            <person name="Wang X."/>
            <person name="Woodford K.J."/>
            <person name="Wortman J.R."/>
            <person name="Wu M."/>
            <person name="Yao A."/>
            <person name="Zdobnov E.M."/>
            <person name="Zhang H."/>
            <person name="Zhao Q."/>
            <person name="Zhao S."/>
            <person name="Zhu S.C."/>
            <person name="Zhimulev I."/>
            <person name="Coluzzi M."/>
            <person name="della Torre A."/>
            <person name="Roth C.W."/>
            <person name="Louis C."/>
            <person name="Kalush F."/>
            <person name="Mural R.J."/>
            <person name="Myers E.W."/>
            <person name="Adams M.D."/>
            <person name="Smith H.O."/>
            <person name="Broder S."/>
            <person name="Gardner M.J."/>
            <person name="Fraser C.M."/>
            <person name="Birney E."/>
            <person name="Bork P."/>
            <person name="Brey P.T."/>
            <person name="Venter J.C."/>
            <person name="Weissenbach J."/>
            <person name="Kafatos F.C."/>
            <person name="Collins F.H."/>
            <person name="Hoffman S.L."/>
        </authorList>
    </citation>
    <scope>NUCLEOTIDE SEQUENCE [LARGE SCALE GENOMIC DNA]</scope>
    <source>
        <strain>PEST</strain>
    </source>
</reference>
<organism>
    <name type="scientific">Anopheles gambiae</name>
    <name type="common">African malaria mosquito</name>
    <dbReference type="NCBI Taxonomy" id="7165"/>
    <lineage>
        <taxon>Eukaryota</taxon>
        <taxon>Metazoa</taxon>
        <taxon>Ecdysozoa</taxon>
        <taxon>Arthropoda</taxon>
        <taxon>Hexapoda</taxon>
        <taxon>Insecta</taxon>
        <taxon>Pterygota</taxon>
        <taxon>Neoptera</taxon>
        <taxon>Endopterygota</taxon>
        <taxon>Diptera</taxon>
        <taxon>Nematocera</taxon>
        <taxon>Culicoidea</taxon>
        <taxon>Culicidae</taxon>
        <taxon>Anophelinae</taxon>
        <taxon>Anopheles</taxon>
    </lineage>
</organism>
<proteinExistence type="inferred from homology"/>
<evidence type="ECO:0000250" key="1"/>
<evidence type="ECO:0000256" key="2">
    <source>
        <dbReference type="SAM" id="MobiDB-lite"/>
    </source>
</evidence>
<evidence type="ECO:0000305" key="3"/>
<comment type="function">
    <text evidence="1">Component of the Mediator complex, a coactivator involved in the regulated transcription of nearly all RNA polymerase II-dependent genes. Mediator functions as a bridge to convey information from gene-specific regulatory proteins to the basal RNA polymerase II transcription machinery. Mediator is recruited to promoters by direct interactions with regulatory proteins and serves as a scaffold for the assembly of a functional preinitiation complex with RNA polymerase II and the general transcription factors (By similarity).</text>
</comment>
<comment type="subunit">
    <text evidence="1">Component of the Mediator complex.</text>
</comment>
<comment type="subcellular location">
    <subcellularLocation>
        <location evidence="1">Nucleus</location>
    </subcellularLocation>
</comment>
<comment type="similarity">
    <text evidence="3">Belongs to the Mediator complex subunit 17 family.</text>
</comment>
<sequence>MSLSANISVEAPIENQIQEIAYDGTEIYQLPPTLSEHLAKCATKIDFSKTSSDIDLLQQSIKKEDEKKEEESKDPKEQFQSSLWPWDSVRNKLKEALTEVCVLSDVLNIAKEKRYMVLDPIPQEPPEVKQMVLVYARKKALASAANILQSGVERLKAVQSDQGVSRSNSTDFHIELLRLRRNWRLKKVSNTIIGDLSYRTAGSKFMHPGMFEVTKAEDEESGSPPASPSGSGAAGTVACPKINSALRVNVPTELQGVAFIKVITQKDQEDLCTATVNMMGSTQLVPQAGAWQQTLEYAQNVLFCKELFNQLAREAVQLQAPIPHVVVGNQIRATLLPGIQLIISLCHSTSSDSNNSSEPIKDHDHVLEHSLHQLLREFHHKNTHHPFPHPASGPLGPSKKRMLAGPSAYDRHELLEMTKSQTLLEQIIAQAQHIFTRRRTQYVLDTVARDVKDPMITSHWNAMNSPTMSCVKINITSHGYDANLRTSLVIHVKERSLKCICRDGRIMHMSYEPQELRDLILCQISQHQIVCLQNLAKCMAWQILSSSSHLGIGSVEPLGNASSCVLASPNSDRLIAVQVRCDSQIDVKVFIAQSPAKDFFPGSLVQGRHWEHLGGHFKEVRFDKMEGKNFHNKMEFLMASLTSQS</sequence>
<gene>
    <name type="primary">MED17</name>
    <name type="ORF">AGAP009141</name>
</gene>
<name>MED17_ANOGA</name>
<feature type="chain" id="PRO_0000304705" description="Mediator of RNA polymerase II transcription subunit 17">
    <location>
        <begin position="1"/>
        <end position="645"/>
    </location>
</feature>
<feature type="region of interest" description="Disordered" evidence="2">
    <location>
        <begin position="215"/>
        <end position="234"/>
    </location>
</feature>
<feature type="compositionally biased region" description="Low complexity" evidence="2">
    <location>
        <begin position="222"/>
        <end position="234"/>
    </location>
</feature>
<keyword id="KW-0010">Activator</keyword>
<keyword id="KW-0539">Nucleus</keyword>
<keyword id="KW-1185">Reference proteome</keyword>
<keyword id="KW-0804">Transcription</keyword>
<keyword id="KW-0805">Transcription regulation</keyword>
<dbReference type="EMBL" id="AAAB01008984">
    <property type="protein sequence ID" value="EAA14731.2"/>
    <property type="molecule type" value="Genomic_DNA"/>
</dbReference>
<dbReference type="SMR" id="Q7PVZ2"/>
<dbReference type="FunCoup" id="Q7PVZ2">
    <property type="interactions" value="2091"/>
</dbReference>
<dbReference type="STRING" id="7165.Q7PVZ2"/>
<dbReference type="PaxDb" id="7165-AGAP009141-PA"/>
<dbReference type="EnsemblMetazoa" id="AGAP009141-RA">
    <property type="protein sequence ID" value="AGAP009141-PA"/>
    <property type="gene ID" value="AGAP009141"/>
</dbReference>
<dbReference type="GeneID" id="1280098"/>
<dbReference type="KEGG" id="aga:1280098"/>
<dbReference type="CTD" id="9440"/>
<dbReference type="VEuPathDB" id="VectorBase:AGAMI1_004674"/>
<dbReference type="VEuPathDB" id="VectorBase:AGAP009141"/>
<dbReference type="eggNOG" id="KOG4512">
    <property type="taxonomic scope" value="Eukaryota"/>
</dbReference>
<dbReference type="HOGENOM" id="CLU_028003_1_0_1"/>
<dbReference type="InParanoid" id="Q7PVZ2"/>
<dbReference type="OMA" id="HMSYEPQ"/>
<dbReference type="PhylomeDB" id="Q7PVZ2"/>
<dbReference type="Proteomes" id="UP000007062">
    <property type="component" value="Chromosome 3R"/>
</dbReference>
<dbReference type="GO" id="GO:0070847">
    <property type="term" value="C:core mediator complex"/>
    <property type="evidence" value="ECO:0000318"/>
    <property type="project" value="GO_Central"/>
</dbReference>
<dbReference type="GO" id="GO:0016592">
    <property type="term" value="C:mediator complex"/>
    <property type="evidence" value="ECO:0000318"/>
    <property type="project" value="GO_Central"/>
</dbReference>
<dbReference type="GO" id="GO:0003712">
    <property type="term" value="F:transcription coregulator activity"/>
    <property type="evidence" value="ECO:0000318"/>
    <property type="project" value="GO_Central"/>
</dbReference>
<dbReference type="GO" id="GO:0006357">
    <property type="term" value="P:regulation of transcription by RNA polymerase II"/>
    <property type="evidence" value="ECO:0000318"/>
    <property type="project" value="GO_Central"/>
</dbReference>
<dbReference type="InterPro" id="IPR019313">
    <property type="entry name" value="Mediator_Med17"/>
</dbReference>
<dbReference type="PANTHER" id="PTHR13114">
    <property type="entry name" value="MEDIATOR OF RNA POLYMERASE II TRANSCRIPTION SUBUNIT 17"/>
    <property type="match status" value="1"/>
</dbReference>
<dbReference type="PANTHER" id="PTHR13114:SF7">
    <property type="entry name" value="MEDIATOR OF RNA POLYMERASE II TRANSCRIPTION SUBUNIT 17"/>
    <property type="match status" value="1"/>
</dbReference>
<dbReference type="Pfam" id="PF10156">
    <property type="entry name" value="Med17"/>
    <property type="match status" value="1"/>
</dbReference>